<protein>
    <recommendedName>
        <fullName>Glandular kallikrein</fullName>
        <ecNumber>3.4.21.35</ecNumber>
    </recommendedName>
    <alternativeName>
        <fullName>Tissue kallikrein</fullName>
    </alternativeName>
</protein>
<dbReference type="EC" id="3.4.21.35"/>
<dbReference type="PIR" id="A00938">
    <property type="entry name" value="KQPG"/>
</dbReference>
<dbReference type="PDB" id="1HIA">
    <property type="method" value="X-ray"/>
    <property type="resolution" value="2.40 A"/>
    <property type="chains" value="A/X=8-87, B/Y=95-246"/>
</dbReference>
<dbReference type="PDB" id="2KAI">
    <property type="method" value="X-ray"/>
    <property type="resolution" value="2.50 A"/>
    <property type="chains" value="A=8-87, B=95-246"/>
</dbReference>
<dbReference type="PDB" id="2PKA">
    <property type="method" value="X-ray"/>
    <property type="resolution" value="2.05 A"/>
    <property type="chains" value="A/X=8-87, B/Y=95-246"/>
</dbReference>
<dbReference type="PDBsum" id="1HIA"/>
<dbReference type="PDBsum" id="2KAI"/>
<dbReference type="PDBsum" id="2PKA"/>
<dbReference type="SMR" id="P00752"/>
<dbReference type="FunCoup" id="P00752">
    <property type="interactions" value="9"/>
</dbReference>
<dbReference type="STRING" id="9823.ENSSSCP00000055845"/>
<dbReference type="BindingDB" id="P00752"/>
<dbReference type="ChEMBL" id="CHEMBL3243909"/>
<dbReference type="GlyGen" id="P00752">
    <property type="glycosylation" value="2 sites"/>
</dbReference>
<dbReference type="PaxDb" id="9823-ENSSSCP00000027121"/>
<dbReference type="eggNOG" id="KOG3627">
    <property type="taxonomic scope" value="Eukaryota"/>
</dbReference>
<dbReference type="InParanoid" id="P00752"/>
<dbReference type="EvolutionaryTrace" id="P00752"/>
<dbReference type="Proteomes" id="UP000008227">
    <property type="component" value="Unplaced"/>
</dbReference>
<dbReference type="Proteomes" id="UP000314985">
    <property type="component" value="Unplaced"/>
</dbReference>
<dbReference type="Proteomes" id="UP000694570">
    <property type="component" value="Unplaced"/>
</dbReference>
<dbReference type="Proteomes" id="UP000694571">
    <property type="component" value="Unplaced"/>
</dbReference>
<dbReference type="Proteomes" id="UP000694720">
    <property type="component" value="Unplaced"/>
</dbReference>
<dbReference type="Proteomes" id="UP000694722">
    <property type="component" value="Unplaced"/>
</dbReference>
<dbReference type="Proteomes" id="UP000694723">
    <property type="component" value="Unplaced"/>
</dbReference>
<dbReference type="Proteomes" id="UP000694724">
    <property type="component" value="Unplaced"/>
</dbReference>
<dbReference type="Proteomes" id="UP000694725">
    <property type="component" value="Unplaced"/>
</dbReference>
<dbReference type="Proteomes" id="UP000694726">
    <property type="component" value="Unplaced"/>
</dbReference>
<dbReference type="Proteomes" id="UP000694727">
    <property type="component" value="Unplaced"/>
</dbReference>
<dbReference type="Proteomes" id="UP000694728">
    <property type="component" value="Unplaced"/>
</dbReference>
<dbReference type="GO" id="GO:0005615">
    <property type="term" value="C:extracellular space"/>
    <property type="evidence" value="ECO:0000318"/>
    <property type="project" value="GO_Central"/>
</dbReference>
<dbReference type="GO" id="GO:0030141">
    <property type="term" value="C:secretory granule"/>
    <property type="evidence" value="ECO:0000318"/>
    <property type="project" value="GO_Central"/>
</dbReference>
<dbReference type="GO" id="GO:0004252">
    <property type="term" value="F:serine-type endopeptidase activity"/>
    <property type="evidence" value="ECO:0000318"/>
    <property type="project" value="GO_Central"/>
</dbReference>
<dbReference type="GO" id="GO:0003073">
    <property type="term" value="P:regulation of systemic arterial blood pressure"/>
    <property type="evidence" value="ECO:0000318"/>
    <property type="project" value="GO_Central"/>
</dbReference>
<dbReference type="GO" id="GO:0031638">
    <property type="term" value="P:zymogen activation"/>
    <property type="evidence" value="ECO:0000318"/>
    <property type="project" value="GO_Central"/>
</dbReference>
<dbReference type="CDD" id="cd00190">
    <property type="entry name" value="Tryp_SPc"/>
    <property type="match status" value="1"/>
</dbReference>
<dbReference type="FunFam" id="2.40.10.10:FF:000021">
    <property type="entry name" value="Kallikrein 1"/>
    <property type="match status" value="1"/>
</dbReference>
<dbReference type="FunFam" id="2.40.10.10:FF:000010">
    <property type="entry name" value="Kallikrein related peptidase 11"/>
    <property type="match status" value="1"/>
</dbReference>
<dbReference type="Gene3D" id="2.40.10.10">
    <property type="entry name" value="Trypsin-like serine proteases"/>
    <property type="match status" value="2"/>
</dbReference>
<dbReference type="InterPro" id="IPR009003">
    <property type="entry name" value="Peptidase_S1_PA"/>
</dbReference>
<dbReference type="InterPro" id="IPR043504">
    <property type="entry name" value="Peptidase_S1_PA_chymotrypsin"/>
</dbReference>
<dbReference type="InterPro" id="IPR001314">
    <property type="entry name" value="Peptidase_S1A"/>
</dbReference>
<dbReference type="InterPro" id="IPR001254">
    <property type="entry name" value="Trypsin_dom"/>
</dbReference>
<dbReference type="InterPro" id="IPR018114">
    <property type="entry name" value="TRYPSIN_HIS"/>
</dbReference>
<dbReference type="InterPro" id="IPR033116">
    <property type="entry name" value="TRYPSIN_SER"/>
</dbReference>
<dbReference type="PANTHER" id="PTHR24271:SF47">
    <property type="entry name" value="KALLIKREIN-1"/>
    <property type="match status" value="1"/>
</dbReference>
<dbReference type="PANTHER" id="PTHR24271">
    <property type="entry name" value="KALLIKREIN-RELATED"/>
    <property type="match status" value="1"/>
</dbReference>
<dbReference type="Pfam" id="PF00089">
    <property type="entry name" value="Trypsin"/>
    <property type="match status" value="1"/>
</dbReference>
<dbReference type="PRINTS" id="PR00722">
    <property type="entry name" value="CHYMOTRYPSIN"/>
</dbReference>
<dbReference type="SMART" id="SM00020">
    <property type="entry name" value="Tryp_SPc"/>
    <property type="match status" value="1"/>
</dbReference>
<dbReference type="SUPFAM" id="SSF50494">
    <property type="entry name" value="Trypsin-like serine proteases"/>
    <property type="match status" value="1"/>
</dbReference>
<dbReference type="PROSITE" id="PS50240">
    <property type="entry name" value="TRYPSIN_DOM"/>
    <property type="match status" value="1"/>
</dbReference>
<dbReference type="PROSITE" id="PS00134">
    <property type="entry name" value="TRYPSIN_HIS"/>
    <property type="match status" value="1"/>
</dbReference>
<dbReference type="PROSITE" id="PS00135">
    <property type="entry name" value="TRYPSIN_SER"/>
    <property type="match status" value="1"/>
</dbReference>
<sequence>APPIQSRIIGGRECEKNSHPWQVAIYHYSSFQCGGVLVNPKWVLTAAHCKNDNYEVWLGRHNLFENENTAQFFGVTADFPHPGFNLSLLKXHTKADGKDYSHDLMLLRLQSPAKITDAVKVLELPTQEPELGSTCEASGWGSIEPGPDBFEFPDEIQCVQLTLLQNTFCABAHPBKVTESMLCAGYLPGGKDTCMGDSGGPLICNGMWQGITSWGHTPCGSANKPSIYTKLIFYLDWINDTITENP</sequence>
<comment type="function">
    <text>Glandular kallikreins cleave Met-Lys and Arg-Ser bonds in kininogen to release Lys-bradykinin.</text>
</comment>
<comment type="catalytic activity">
    <reaction>
        <text>Preferential cleavage of Arg-|-Xaa bonds in small molecule substrates. Highly selective action to release kallidin (lysyl-bradykinin) from kininogen involves hydrolysis of Met-|-Xaa or Leu-|-Xaa.</text>
        <dbReference type="EC" id="3.4.21.35"/>
    </reaction>
</comment>
<comment type="subunit">
    <text>Monomer.</text>
</comment>
<comment type="similarity">
    <text evidence="2">Belongs to the peptidase S1 family. Kallikrein subfamily.</text>
</comment>
<comment type="caution">
    <text evidence="5">Native porcine kallikrein is a monomer. Chains of the pancreatic beta-kallikrein are heterogeneous artifacts of proteolytic degradation during isolation.</text>
</comment>
<evidence type="ECO:0000255" key="1"/>
<evidence type="ECO:0000255" key="2">
    <source>
        <dbReference type="PROSITE-ProRule" id="PRU00274"/>
    </source>
</evidence>
<evidence type="ECO:0000269" key="3">
    <source ref="2"/>
</evidence>
<evidence type="ECO:0000269" key="4">
    <source ref="3"/>
</evidence>
<evidence type="ECO:0000305" key="5"/>
<evidence type="ECO:0007829" key="6">
    <source>
        <dbReference type="PDB" id="1HIA"/>
    </source>
</evidence>
<evidence type="ECO:0007829" key="7">
    <source>
        <dbReference type="PDB" id="2PKA"/>
    </source>
</evidence>
<proteinExistence type="evidence at protein level"/>
<organism>
    <name type="scientific">Sus scrofa</name>
    <name type="common">Pig</name>
    <dbReference type="NCBI Taxonomy" id="9823"/>
    <lineage>
        <taxon>Eukaryota</taxon>
        <taxon>Metazoa</taxon>
        <taxon>Chordata</taxon>
        <taxon>Craniata</taxon>
        <taxon>Vertebrata</taxon>
        <taxon>Euteleostomi</taxon>
        <taxon>Mammalia</taxon>
        <taxon>Eutheria</taxon>
        <taxon>Laurasiatheria</taxon>
        <taxon>Artiodactyla</taxon>
        <taxon>Suina</taxon>
        <taxon>Suidae</taxon>
        <taxon>Sus</taxon>
    </lineage>
</organism>
<feature type="propeptide" id="PRO_0000027964" evidence="3 4">
    <location>
        <begin position="1"/>
        <end position="7"/>
    </location>
</feature>
<feature type="chain" id="PRO_0000027965" description="Glandular kallikrein">
    <location>
        <begin position="8"/>
        <end position="246"/>
    </location>
</feature>
<feature type="domain" description="Peptidase S1" evidence="2">
    <location>
        <begin position="8"/>
        <end position="243"/>
    </location>
</feature>
<feature type="region of interest" description="Kallikrein (autolysis) loop">
    <location>
        <begin position="85"/>
        <end position="104"/>
    </location>
</feature>
<feature type="active site" description="Charge relay system">
    <location>
        <position position="48"/>
    </location>
</feature>
<feature type="active site" description="Charge relay system">
    <location>
        <position position="103"/>
    </location>
</feature>
<feature type="active site" description="Charge relay system">
    <location>
        <position position="198"/>
    </location>
</feature>
<feature type="glycosylation site" description="N-linked (GlcNAc...) asparagine" evidence="1">
    <location>
        <position position="85"/>
    </location>
</feature>
<feature type="glycosylation site" description="N-linked (GlcNAc...) asparagine" evidence="1">
    <location>
        <position position="239"/>
    </location>
</feature>
<feature type="disulfide bond">
    <location>
        <begin position="14"/>
        <end position="158"/>
    </location>
</feature>
<feature type="disulfide bond">
    <location>
        <begin position="33"/>
        <end position="49"/>
    </location>
</feature>
<feature type="disulfide bond">
    <location>
        <begin position="135"/>
        <end position="204"/>
    </location>
</feature>
<feature type="disulfide bond">
    <location>
        <begin position="169"/>
        <end position="183"/>
    </location>
</feature>
<feature type="disulfide bond">
    <location>
        <begin position="194"/>
        <end position="219"/>
    </location>
</feature>
<feature type="strand" evidence="7">
    <location>
        <begin position="22"/>
        <end position="27"/>
    </location>
</feature>
<feature type="strand" evidence="7">
    <location>
        <begin position="30"/>
        <end position="39"/>
    </location>
</feature>
<feature type="strand" evidence="7">
    <location>
        <begin position="42"/>
        <end position="45"/>
    </location>
</feature>
<feature type="helix" evidence="7">
    <location>
        <begin position="47"/>
        <end position="49"/>
    </location>
</feature>
<feature type="strand" evidence="7">
    <location>
        <begin position="55"/>
        <end position="59"/>
    </location>
</feature>
<feature type="strand" evidence="6">
    <location>
        <begin position="61"/>
        <end position="65"/>
    </location>
</feature>
<feature type="strand" evidence="7">
    <location>
        <begin position="71"/>
        <end position="80"/>
    </location>
</feature>
<feature type="turn" evidence="7">
    <location>
        <begin position="82"/>
        <end position="86"/>
    </location>
</feature>
<feature type="strand" evidence="7">
    <location>
        <begin position="105"/>
        <end position="111"/>
    </location>
</feature>
<feature type="strand" evidence="7">
    <location>
        <begin position="134"/>
        <end position="141"/>
    </location>
</feature>
<feature type="strand" evidence="7">
    <location>
        <begin position="157"/>
        <end position="164"/>
    </location>
</feature>
<feature type="helix" evidence="7">
    <location>
        <begin position="166"/>
        <end position="170"/>
    </location>
</feature>
<feature type="strand" evidence="7">
    <location>
        <begin position="181"/>
        <end position="185"/>
    </location>
</feature>
<feature type="strand" evidence="7">
    <location>
        <begin position="201"/>
        <end position="204"/>
    </location>
</feature>
<feature type="strand" evidence="7">
    <location>
        <begin position="207"/>
        <end position="212"/>
    </location>
</feature>
<feature type="strand" evidence="7">
    <location>
        <begin position="226"/>
        <end position="230"/>
    </location>
</feature>
<feature type="helix" evidence="7">
    <location>
        <begin position="231"/>
        <end position="234"/>
    </location>
</feature>
<feature type="helix" evidence="7">
    <location>
        <begin position="235"/>
        <end position="244"/>
    </location>
</feature>
<keyword id="KW-0002">3D-structure</keyword>
<keyword id="KW-0903">Direct protein sequencing</keyword>
<keyword id="KW-1015">Disulfide bond</keyword>
<keyword id="KW-0325">Glycoprotein</keyword>
<keyword id="KW-0378">Hydrolase</keyword>
<keyword id="KW-0645">Protease</keyword>
<keyword id="KW-1185">Reference proteome</keyword>
<keyword id="KW-0720">Serine protease</keyword>
<keyword id="KW-0865">Zymogen</keyword>
<name>KLK_PIG</name>
<reference key="1">
    <citation type="journal article" date="1988" name="Chem. Pharm. Bull.">
        <title>Generation of alpha- and beta-kallikreins from porcine pancreatic prokallikrein by the action of trypsin.</title>
        <authorList>
            <person name="Kamada M."/>
            <person name="Aoki K."/>
            <person name="Ikekita M."/>
            <person name="Kizuki K."/>
            <person name="Moriya H."/>
            <person name="Kamo M."/>
            <person name="Tsugita A."/>
        </authorList>
    </citation>
    <scope>PROTEIN SEQUENCE OF 1-15 AND 95-102</scope>
</reference>
<reference key="2">
    <citation type="journal article" date="1979" name="Adv. Exp. Med. Biol.">
        <title>The primary structure of porcine glandular kallikreins.</title>
        <authorList>
            <person name="Tschesche H."/>
            <person name="Mair G."/>
            <person name="Godec G."/>
            <person name="Fiedler F."/>
            <person name="Ehret W."/>
            <person name="Hirschauer C."/>
            <person name="Lemon M."/>
            <person name="Fritz H."/>
            <person name="Schmidt-Kastner G."/>
            <person name="Kutzbach C."/>
        </authorList>
    </citation>
    <scope>PROTEIN SEQUENCE OF 8-87 AND 95-246</scope>
    <source>
        <tissue>Pancreas</tissue>
    </source>
</reference>
<reference key="3">
    <citation type="thesis" date="1976" institute="University of Munich" country="Germany">
        <title>The primary structure of the kallikrein from porcine pancreas.</title>
        <authorList>
            <person name="Ehret W."/>
        </authorList>
    </citation>
    <scope>PROTEIN SEQUENCE OF 8-87; 95-127 AND 176-246</scope>
    <source>
        <tissue>Pancreas</tissue>
    </source>
</reference>
<reference key="4">
    <citation type="journal article" date="1990" name="Chem. Pharm. Bull.">
        <title>Generation of a different type of beta-kallikrein from porcine pancreatic alpha-kallikrein by the action of chymotrypsin -- observation of proteolytic processing occurring around 'kallikrein autolysis loop' region.</title>
        <authorList>
            <person name="Kamada M."/>
            <person name="Ikekita M."/>
            <person name="Kurahashi T."/>
            <person name="Aoki K."/>
            <person name="Kizuki K."/>
            <person name="Moriya H."/>
            <person name="Sweeley C.C."/>
            <person name="Kamo M."/>
            <person name="Tsugita A."/>
        </authorList>
    </citation>
    <scope>PROTEIN SEQUENCE OF 84-98</scope>
</reference>
<reference key="5">
    <citation type="thesis" date="1978" institute="University of Munich" country="Germany">
        <title>Investigation of the sequence of amino acid residues 127 to 174 of the kallikrein from porcine pancreas.</title>
        <authorList>
            <person name="Ehret W."/>
        </authorList>
    </citation>
    <scope>PROTEIN SEQUENCE OF 128-175</scope>
    <source>
        <tissue>Pancreas</tissue>
    </source>
</reference>
<reference key="6">
    <citation type="journal article" date="1981" name="Methods Enzymol.">
        <title>Porcine glandular kallikreins.</title>
        <authorList>
            <person name="Fiedler F."/>
            <person name="Fink E."/>
            <person name="Tschesche H."/>
            <person name="Fritz H."/>
        </authorList>
    </citation>
    <scope>REVIEW</scope>
</reference>
<reference key="7">
    <citation type="journal article" date="1983" name="J. Mol. Biol.">
        <title>Refined 2-A X-ray crystal structure of porcine pancreatic kallikrein A, a specific trypsin-like serine proteinase. Crystallization, structure determination, crystallographic refinement, structure and its comparison with bovine trypsin.</title>
        <authorList>
            <person name="Bode W."/>
            <person name="Chen Z."/>
            <person name="Bartels K."/>
            <person name="Kutzbach C."/>
            <person name="Schmidt-Kastner G."/>
            <person name="Bartunik H."/>
        </authorList>
    </citation>
    <scope>X-RAY CRYSTALLOGRAPHY (2 ANGSTROMS)</scope>
    <scope>SEQUENCE REVISION</scope>
</reference>
<reference key="8">
    <citation type="journal article" date="1983" name="J. Mol. Biol.">
        <title>Refined 2.5 A X-ray crystal structure of the complex formed by porcine kallikrein A and the bovine pancreatic trypsin inhibitor. Crystallization, Patterson search, structure determination, refinement, structure and comparison with its components and with the bovine trypsin-pancreatic trypsin inhibitor complex.</title>
        <authorList>
            <person name="Chen Z."/>
            <person name="Bode W."/>
        </authorList>
    </citation>
    <scope>X-RAY CRYSTALLOGRAPHY (2.5 ANGSTROMS) OF COMPLEX WITH BOVINE PANCREATIC TRYPSIN INHIBITOR</scope>
</reference>
<reference key="9">
    <citation type="journal article" date="1997" name="Structure">
        <title>A new structural class of serine protease inhibitors revealed by the structure of the hirustasin-kallikrein complex.</title>
        <authorList>
            <person name="Mittl P.R.E."/>
            <person name="di Marco S."/>
            <person name="Fendrich G."/>
            <person name="Pohlig G."/>
            <person name="Heim J."/>
            <person name="Sommerhoff C."/>
            <person name="Fritz H."/>
            <person name="Priestle J.P."/>
            <person name="Gruetter M.G."/>
        </authorList>
    </citation>
    <scope>X-RAY CRYSTALLOGRAPHY (2.4 ANGSTROMS) OF COMPLEX WITH HIRUSTASIN</scope>
</reference>
<reference key="10">
    <citation type="journal article" date="1997" name="Structure">
        <authorList>
            <person name="Mittl P.R.E."/>
            <person name="di Marco S."/>
            <person name="Fendrich G."/>
            <person name="Pohlig G."/>
            <person name="Heim J."/>
            <person name="Sommerhoff C."/>
            <person name="Fritz H."/>
            <person name="Priestle J.P."/>
            <person name="Gruetter M.G."/>
        </authorList>
    </citation>
    <scope>ERRATUM OF PUBMED:9032072</scope>
</reference>
<reference key="11">
    <citation type="journal article" date="1988" name="Biochemistry">
        <title>Structural analyses of asparagine-linked oligosaccharides of porcine pancreatic kallikrein.</title>
        <authorList>
            <person name="Tomiya N."/>
            <person name="Yamaguchi T."/>
            <person name="Awaya J."/>
            <person name="Kurono M."/>
            <person name="Endo S."/>
            <person name="Arata Y."/>
            <person name="Takahashi N."/>
            <person name="Ishihara H."/>
            <person name="Mori M."/>
            <person name="Tejima S."/>
        </authorList>
    </citation>
    <scope>STRUCTURE OF CARBOHYDRATES</scope>
</reference>
<accession>P00752</accession>